<gene>
    <name evidence="8" type="primary">Abcb1b</name>
    <name type="synonym">Abcb1</name>
    <name type="synonym">Mdr1</name>
    <name type="synonym">Mdr1b</name>
    <name type="synonym">Pgy1</name>
    <name type="synonym">Pgy1-1</name>
</gene>
<keyword id="KW-0067">ATP-binding</keyword>
<keyword id="KW-1003">Cell membrane</keyword>
<keyword id="KW-0963">Cytoplasm</keyword>
<keyword id="KW-0325">Glycoprotein</keyword>
<keyword id="KW-0445">Lipid transport</keyword>
<keyword id="KW-0472">Membrane</keyword>
<keyword id="KW-0547">Nucleotide-binding</keyword>
<keyword id="KW-0597">Phosphoprotein</keyword>
<keyword id="KW-1185">Reference proteome</keyword>
<keyword id="KW-0677">Repeat</keyword>
<keyword id="KW-1278">Translocase</keyword>
<keyword id="KW-0812">Transmembrane</keyword>
<keyword id="KW-1133">Transmembrane helix</keyword>
<keyword id="KW-0813">Transport</keyword>
<dbReference type="EC" id="7.6.2.2" evidence="2"/>
<dbReference type="EC" id="7.6.2.1" evidence="2"/>
<dbReference type="EMBL" id="M14757">
    <property type="protein sequence ID" value="AAA79005.1"/>
    <property type="molecule type" value="mRNA"/>
</dbReference>
<dbReference type="EMBL" id="M60348">
    <property type="protein sequence ID" value="AAA39513.1"/>
    <property type="molecule type" value="Genomic_DNA"/>
</dbReference>
<dbReference type="CCDS" id="CCDS19085.1"/>
<dbReference type="PIR" id="A33719">
    <property type="entry name" value="DVMS1"/>
</dbReference>
<dbReference type="RefSeq" id="NP_035205.1">
    <property type="nucleotide sequence ID" value="NM_011075.2"/>
</dbReference>
<dbReference type="SMR" id="P06795"/>
<dbReference type="BioGRID" id="202138">
    <property type="interactions" value="2"/>
</dbReference>
<dbReference type="FunCoup" id="P06795">
    <property type="interactions" value="258"/>
</dbReference>
<dbReference type="STRING" id="10090.ENSMUSP00000009058"/>
<dbReference type="BindingDB" id="P06795"/>
<dbReference type="ChEMBL" id="CHEMBL3467"/>
<dbReference type="GlyCosmos" id="P06795">
    <property type="glycosylation" value="4 sites, No reported glycans"/>
</dbReference>
<dbReference type="GlyGen" id="P06795">
    <property type="glycosylation" value="6 sites, 1 N-linked glycan (1 site), 1 O-linked glycan (1 site)"/>
</dbReference>
<dbReference type="iPTMnet" id="P06795"/>
<dbReference type="PhosphoSitePlus" id="P06795"/>
<dbReference type="SwissPalm" id="P06795"/>
<dbReference type="jPOST" id="P06795"/>
<dbReference type="PaxDb" id="10090-ENSMUSP00000009058"/>
<dbReference type="ProteomicsDB" id="293447"/>
<dbReference type="Pumba" id="P06795"/>
<dbReference type="DNASU" id="18669"/>
<dbReference type="Ensembl" id="ENSMUST00000009058.10">
    <property type="protein sequence ID" value="ENSMUSP00000009058.6"/>
    <property type="gene ID" value="ENSMUSG00000028970.10"/>
</dbReference>
<dbReference type="GeneID" id="18669"/>
<dbReference type="KEGG" id="mmu:18669"/>
<dbReference type="UCSC" id="uc008wko.2">
    <property type="organism name" value="mouse"/>
</dbReference>
<dbReference type="AGR" id="MGI:97568"/>
<dbReference type="CTD" id="18669"/>
<dbReference type="MGI" id="MGI:97568">
    <property type="gene designation" value="Abcb1b"/>
</dbReference>
<dbReference type="VEuPathDB" id="HostDB:ENSMUSG00000028970"/>
<dbReference type="eggNOG" id="KOG0055">
    <property type="taxonomic scope" value="Eukaryota"/>
</dbReference>
<dbReference type="GeneTree" id="ENSGT00940000155287"/>
<dbReference type="HOGENOM" id="CLU_000604_17_8_1"/>
<dbReference type="InParanoid" id="P06795"/>
<dbReference type="OMA" id="GYFRLAM"/>
<dbReference type="OrthoDB" id="6500128at2759"/>
<dbReference type="PhylomeDB" id="P06795"/>
<dbReference type="TreeFam" id="TF105193"/>
<dbReference type="SABIO-RK" id="P06795"/>
<dbReference type="BioGRID-ORCS" id="18669">
    <property type="hits" value="2 hits in 76 CRISPR screens"/>
</dbReference>
<dbReference type="ChiTaRS" id="Abcb1b">
    <property type="organism name" value="mouse"/>
</dbReference>
<dbReference type="PRO" id="PR:P06795"/>
<dbReference type="Proteomes" id="UP000000589">
    <property type="component" value="Chromosome 5"/>
</dbReference>
<dbReference type="RNAct" id="P06795">
    <property type="molecule type" value="protein"/>
</dbReference>
<dbReference type="Bgee" id="ENSMUSG00000028970">
    <property type="expression patterns" value="Expressed in adrenal gland and 153 other cell types or tissues"/>
</dbReference>
<dbReference type="ExpressionAtlas" id="P06795">
    <property type="expression patterns" value="baseline and differential"/>
</dbReference>
<dbReference type="GO" id="GO:0016324">
    <property type="term" value="C:apical plasma membrane"/>
    <property type="evidence" value="ECO:0007669"/>
    <property type="project" value="UniProtKB-SubCell"/>
</dbReference>
<dbReference type="GO" id="GO:0046581">
    <property type="term" value="C:intercellular canaliculus"/>
    <property type="evidence" value="ECO:0000314"/>
    <property type="project" value="MGI"/>
</dbReference>
<dbReference type="GO" id="GO:0005739">
    <property type="term" value="C:mitochondrion"/>
    <property type="evidence" value="ECO:0007005"/>
    <property type="project" value="MGI"/>
</dbReference>
<dbReference type="GO" id="GO:0008559">
    <property type="term" value="F:ABC-type xenobiotic transporter activity"/>
    <property type="evidence" value="ECO:0007669"/>
    <property type="project" value="UniProtKB-EC"/>
</dbReference>
<dbReference type="GO" id="GO:0005524">
    <property type="term" value="F:ATP binding"/>
    <property type="evidence" value="ECO:0007669"/>
    <property type="project" value="UniProtKB-KW"/>
</dbReference>
<dbReference type="GO" id="GO:0016887">
    <property type="term" value="F:ATP hydrolysis activity"/>
    <property type="evidence" value="ECO:0007669"/>
    <property type="project" value="InterPro"/>
</dbReference>
<dbReference type="GO" id="GO:0140328">
    <property type="term" value="F:floppase activity"/>
    <property type="evidence" value="ECO:0000250"/>
    <property type="project" value="UniProtKB"/>
</dbReference>
<dbReference type="GO" id="GO:0090554">
    <property type="term" value="F:phosphatidylcholine floppase activity"/>
    <property type="evidence" value="ECO:0007669"/>
    <property type="project" value="RHEA"/>
</dbReference>
<dbReference type="CDD" id="cd18578">
    <property type="entry name" value="ABC_6TM_Pgp_ABCB1_D2_like"/>
    <property type="match status" value="1"/>
</dbReference>
<dbReference type="CDD" id="cd03249">
    <property type="entry name" value="ABC_MTABC3_MDL1_MDL2"/>
    <property type="match status" value="2"/>
</dbReference>
<dbReference type="FunFam" id="1.20.1560.10:FF:000018">
    <property type="entry name" value="ATP-binding cassette subfamily B member 11"/>
    <property type="match status" value="1"/>
</dbReference>
<dbReference type="FunFam" id="1.20.1560.10:FF:000043">
    <property type="entry name" value="Multidrug resistance protein 1A"/>
    <property type="match status" value="1"/>
</dbReference>
<dbReference type="FunFam" id="3.40.50.300:FF:000479">
    <property type="entry name" value="Multidrug resistance protein 1A"/>
    <property type="match status" value="2"/>
</dbReference>
<dbReference type="Gene3D" id="1.20.1560.10">
    <property type="entry name" value="ABC transporter type 1, transmembrane domain"/>
    <property type="match status" value="1"/>
</dbReference>
<dbReference type="Gene3D" id="3.40.50.300">
    <property type="entry name" value="P-loop containing nucleotide triphosphate hydrolases"/>
    <property type="match status" value="2"/>
</dbReference>
<dbReference type="InterPro" id="IPR003593">
    <property type="entry name" value="AAA+_ATPase"/>
</dbReference>
<dbReference type="InterPro" id="IPR011527">
    <property type="entry name" value="ABC1_TM_dom"/>
</dbReference>
<dbReference type="InterPro" id="IPR036640">
    <property type="entry name" value="ABC1_TM_sf"/>
</dbReference>
<dbReference type="InterPro" id="IPR003439">
    <property type="entry name" value="ABC_transporter-like_ATP-bd"/>
</dbReference>
<dbReference type="InterPro" id="IPR017871">
    <property type="entry name" value="ABC_transporter-like_CS"/>
</dbReference>
<dbReference type="InterPro" id="IPR027417">
    <property type="entry name" value="P-loop_NTPase"/>
</dbReference>
<dbReference type="InterPro" id="IPR039421">
    <property type="entry name" value="Type_1_exporter"/>
</dbReference>
<dbReference type="PANTHER" id="PTHR43394:SF28">
    <property type="entry name" value="ATP-BINDING CASSETTE SUBFAMILY B MEMBER 1"/>
    <property type="match status" value="1"/>
</dbReference>
<dbReference type="PANTHER" id="PTHR43394">
    <property type="entry name" value="ATP-DEPENDENT PERMEASE MDL1, MITOCHONDRIAL"/>
    <property type="match status" value="1"/>
</dbReference>
<dbReference type="Pfam" id="PF00664">
    <property type="entry name" value="ABC_membrane"/>
    <property type="match status" value="2"/>
</dbReference>
<dbReference type="Pfam" id="PF00005">
    <property type="entry name" value="ABC_tran"/>
    <property type="match status" value="2"/>
</dbReference>
<dbReference type="SMART" id="SM00382">
    <property type="entry name" value="AAA"/>
    <property type="match status" value="2"/>
</dbReference>
<dbReference type="SUPFAM" id="SSF90123">
    <property type="entry name" value="ABC transporter transmembrane region"/>
    <property type="match status" value="2"/>
</dbReference>
<dbReference type="SUPFAM" id="SSF52540">
    <property type="entry name" value="P-loop containing nucleoside triphosphate hydrolases"/>
    <property type="match status" value="2"/>
</dbReference>
<dbReference type="PROSITE" id="PS50929">
    <property type="entry name" value="ABC_TM1F"/>
    <property type="match status" value="2"/>
</dbReference>
<dbReference type="PROSITE" id="PS00211">
    <property type="entry name" value="ABC_TRANSPORTER_1"/>
    <property type="match status" value="2"/>
</dbReference>
<dbReference type="PROSITE" id="PS50893">
    <property type="entry name" value="ABC_TRANSPORTER_2"/>
    <property type="match status" value="2"/>
</dbReference>
<feature type="chain" id="PRO_0000093334" description="ATP-dependent translocase ABCB1">
    <location>
        <begin position="1"/>
        <end position="1276"/>
    </location>
</feature>
<feature type="topological domain" description="Cytoplasmic" evidence="1">
    <location>
        <begin position="1"/>
        <end position="43"/>
    </location>
</feature>
<feature type="transmembrane region" description="Helical" evidence="5">
    <location>
        <begin position="44"/>
        <end position="66"/>
    </location>
</feature>
<feature type="topological domain" description="Extracellular" evidence="1">
    <location>
        <begin position="67"/>
        <end position="115"/>
    </location>
</feature>
<feature type="transmembrane region" description="Helical" evidence="5">
    <location>
        <begin position="116"/>
        <end position="136"/>
    </location>
</feature>
<feature type="topological domain" description="Cytoplasmic" evidence="1">
    <location>
        <begin position="137"/>
        <end position="185"/>
    </location>
</feature>
<feature type="transmembrane region" description="Helical" evidence="5">
    <location>
        <begin position="186"/>
        <end position="207"/>
    </location>
</feature>
<feature type="topological domain" description="Extracellular" evidence="1">
    <location>
        <begin position="208"/>
        <end position="214"/>
    </location>
</feature>
<feature type="transmembrane region" description="Helical" evidence="5">
    <location>
        <begin position="215"/>
        <end position="235"/>
    </location>
</feature>
<feature type="topological domain" description="Cytoplasmic" evidence="1">
    <location>
        <begin position="236"/>
        <end position="293"/>
    </location>
</feature>
<feature type="transmembrane region" description="Helical" evidence="5">
    <location>
        <begin position="294"/>
        <end position="315"/>
    </location>
</feature>
<feature type="topological domain" description="Extracellular" evidence="1">
    <location>
        <begin position="316"/>
        <end position="329"/>
    </location>
</feature>
<feature type="transmembrane region" description="Helical" evidence="5">
    <location>
        <begin position="330"/>
        <end position="351"/>
    </location>
</feature>
<feature type="topological domain" description="Cytoplasmic" evidence="1">
    <location>
        <begin position="352"/>
        <end position="709"/>
    </location>
</feature>
<feature type="transmembrane region" description="Helical" evidence="5">
    <location>
        <begin position="710"/>
        <end position="730"/>
    </location>
</feature>
<feature type="topological domain" description="Extracellular" evidence="1">
    <location>
        <begin position="731"/>
        <end position="754"/>
    </location>
</feature>
<feature type="transmembrane region" description="Helical" evidence="5">
    <location>
        <begin position="755"/>
        <end position="775"/>
    </location>
</feature>
<feature type="topological domain" description="Cytoplasmic" evidence="1">
    <location>
        <begin position="776"/>
        <end position="830"/>
    </location>
</feature>
<feature type="transmembrane region" description="Helical" evidence="5">
    <location>
        <begin position="831"/>
        <end position="851"/>
    </location>
</feature>
<feature type="topological domain" description="Extracellular" evidence="1">
    <location>
        <position position="852"/>
    </location>
</feature>
<feature type="transmembrane region" description="Helical" evidence="5">
    <location>
        <begin position="853"/>
        <end position="872"/>
    </location>
</feature>
<feature type="topological domain" description="Cytoplasmic" evidence="1">
    <location>
        <begin position="873"/>
        <end position="932"/>
    </location>
</feature>
<feature type="transmembrane region" description="Helical" evidence="5">
    <location>
        <begin position="933"/>
        <end position="955"/>
    </location>
</feature>
<feature type="topological domain" description="Extracellular" evidence="1">
    <location>
        <begin position="956"/>
        <end position="971"/>
    </location>
</feature>
<feature type="transmembrane region" description="Helical" evidence="5">
    <location>
        <begin position="972"/>
        <end position="993"/>
    </location>
</feature>
<feature type="topological domain" description="Cytoplasmic" evidence="1">
    <location>
        <begin position="994"/>
        <end position="1276"/>
    </location>
</feature>
<feature type="domain" description="ABC transmembrane type-1 1" evidence="5">
    <location>
        <begin position="50"/>
        <end position="356"/>
    </location>
</feature>
<feature type="domain" description="ABC transporter 1" evidence="4">
    <location>
        <begin position="391"/>
        <end position="627"/>
    </location>
</feature>
<feature type="domain" description="ABC transmembrane type-1 2" evidence="5">
    <location>
        <begin position="709"/>
        <end position="998"/>
    </location>
</feature>
<feature type="domain" description="ABC transporter 2" evidence="4">
    <location>
        <begin position="1033"/>
        <end position="1271"/>
    </location>
</feature>
<feature type="region of interest" description="Disordered" evidence="6">
    <location>
        <begin position="1"/>
        <end position="26"/>
    </location>
</feature>
<feature type="region of interest" description="Disordered" evidence="6">
    <location>
        <begin position="633"/>
        <end position="659"/>
    </location>
</feature>
<feature type="compositionally biased region" description="Basic and acidic residues" evidence="6">
    <location>
        <begin position="1"/>
        <end position="15"/>
    </location>
</feature>
<feature type="compositionally biased region" description="Polar residues" evidence="6">
    <location>
        <begin position="640"/>
        <end position="652"/>
    </location>
</feature>
<feature type="binding site" evidence="4">
    <location>
        <begin position="426"/>
        <end position="433"/>
    </location>
    <ligand>
        <name>ATP</name>
        <dbReference type="ChEBI" id="CHEBI:30616"/>
        <label>1</label>
    </ligand>
</feature>
<feature type="binding site" evidence="4">
    <location>
        <begin position="1068"/>
        <end position="1075"/>
    </location>
    <ligand>
        <name>ATP</name>
        <dbReference type="ChEBI" id="CHEBI:30616"/>
        <label>2</label>
    </ligand>
</feature>
<feature type="modified residue" description="Phosphotyrosine" evidence="9">
    <location>
        <position position="641"/>
    </location>
</feature>
<feature type="modified residue" description="Phosphoserine" evidence="9">
    <location>
        <position position="659"/>
    </location>
</feature>
<feature type="glycosylation site" description="N-linked (GlcNAc...) asparagine" evidence="3">
    <location>
        <position position="73"/>
    </location>
</feature>
<feature type="glycosylation site" description="N-linked (GlcNAc...) asparagine" evidence="3">
    <location>
        <position position="91"/>
    </location>
</feature>
<feature type="glycosylation site" description="N-linked (GlcNAc...) asparagine" evidence="3">
    <location>
        <position position="96"/>
    </location>
</feature>
<feature type="glycosylation site" description="N-linked (GlcNAc...) asparagine" evidence="3">
    <location>
        <position position="103"/>
    </location>
</feature>
<accession>P06795</accession>
<reference key="1">
    <citation type="journal article" date="1986" name="Cell">
        <title>Mammalian multidrug resistance gene: complete cDNA sequence indicates strong homology to bacterial transport proteins.</title>
        <authorList>
            <person name="Gros P."/>
            <person name="Croop J."/>
            <person name="Housman D."/>
        </authorList>
    </citation>
    <scope>NUCLEOTIDE SEQUENCE [MRNA]</scope>
</reference>
<reference key="2">
    <citation type="journal article" date="1989" name="Proc. Natl. Acad. Sci. U.S.A.">
        <title>Mammalian multidrug-resistance gene: correlation of exon organization with structural domains and duplication of an ancestral gene.</title>
        <authorList>
            <person name="Raymond M."/>
            <person name="Gros P."/>
        </authorList>
    </citation>
    <scope>NUCLEOTIDE SEQUENCE [GENOMIC DNA]</scope>
</reference>
<reference key="3">
    <citation type="journal article" date="1990" name="Mol. Cell. Biol.">
        <title>Cell-specific activity of cis-acting regulatory elements in the promoter of the mouse multidrug resistance gene mdr1.</title>
        <authorList>
            <person name="Raymond M."/>
            <person name="Gros P."/>
        </authorList>
    </citation>
    <scope>NUCLEOTIDE SEQUENCE [GENOMIC DNA] OF 1-21</scope>
</reference>
<reference key="4">
    <citation type="journal article" date="2009" name="Immunity">
        <title>The phagosomal proteome in interferon-gamma-activated macrophages.</title>
        <authorList>
            <person name="Trost M."/>
            <person name="English L."/>
            <person name="Lemieux S."/>
            <person name="Courcelles M."/>
            <person name="Desjardins M."/>
            <person name="Thibault P."/>
        </authorList>
    </citation>
    <scope>PHOSPHORYLATION [LARGE SCALE ANALYSIS] AT TYR-641 AND SER-659</scope>
    <scope>IDENTIFICATION BY MASS SPECTROMETRY [LARGE SCALE ANALYSIS]</scope>
</reference>
<protein>
    <recommendedName>
        <fullName evidence="2">ATP-dependent translocase ABCB1</fullName>
    </recommendedName>
    <alternativeName>
        <fullName>ATP-binding cassette sub-family B member 1B</fullName>
    </alternativeName>
    <alternativeName>
        <fullName>Multidrug resistance protein 1B</fullName>
        <ecNumber evidence="2">7.6.2.2</ecNumber>
    </alternativeName>
    <alternativeName>
        <fullName>P-glycoprotein 1</fullName>
    </alternativeName>
    <alternativeName>
        <fullName evidence="7">Phospholipid transporter ABCB1</fullName>
        <ecNumber evidence="2">7.6.2.1</ecNumber>
    </alternativeName>
    <cdAntigenName>CD243</cdAntigenName>
</protein>
<organism>
    <name type="scientific">Mus musculus</name>
    <name type="common">Mouse</name>
    <dbReference type="NCBI Taxonomy" id="10090"/>
    <lineage>
        <taxon>Eukaryota</taxon>
        <taxon>Metazoa</taxon>
        <taxon>Chordata</taxon>
        <taxon>Craniata</taxon>
        <taxon>Vertebrata</taxon>
        <taxon>Euteleostomi</taxon>
        <taxon>Mammalia</taxon>
        <taxon>Eutheria</taxon>
        <taxon>Euarchontoglires</taxon>
        <taxon>Glires</taxon>
        <taxon>Rodentia</taxon>
        <taxon>Myomorpha</taxon>
        <taxon>Muroidea</taxon>
        <taxon>Muridae</taxon>
        <taxon>Murinae</taxon>
        <taxon>Mus</taxon>
        <taxon>Mus</taxon>
    </lineage>
</organism>
<sequence>MEFEENLKGRADKNFSKMGKKSKKEKKEKKPAVGVFGMFRYADWLDKLCMILGTLAAIIHGTLLPLLMLVFGNMTDSFTKAEASILPSITNQSGPNSTLIISNSSLEEEMAIYAYYYTGIGAGVLIVAYIQVSLWCLAAGRQIHKIRQKFFHAIMNQEIGWFDVHDVGELNTRLTDDVSKINDGIGDKIGMFFQSITTFLAGFIIGFISGWKLTLVILAVSPLIGLSSALWAKVLTSFTNKELQAYAKAGAVAEEVLAAIRTVIAFGGQQKELERYNKNLEEAKNVGIKKAITASISIGIAYLLVYASYALAFWYGTSLVLSNEYSIGEVLTVFFSILLGTFSIGHLAPNIEAFANARGAAFEIFKIIDNEPSIDSFSTKGYKPDSIMGNLEFKNVHFNYPSRSEVQILKGLNLKVKSGQTVALVGNSGCGKSTTVQLMQRLYDPLEGVVSIDGQDIRTINVRYLREIIGVVSQEPVLFATTIAENIRYGREDVTMDEIEKAVKEANAYDFIMKLPHQFDTLVGERGAQLSGGQKQRIAIARALVRNPKILLLDEATSALDTESEAVVQAALDKAREGRTTIVIAHRLSTVRNADVIAGFDGGVIVEQGNHDELMREKGIYFKLVMTQTRGNEIEPGNNAYGSQSDTDASELTSEESKSPLIRRSIYRSVHRKQDQERRLSMKEAVDEDVPLVSFWRILNLNLSEWPYLLVGVLCAVINGCIQPVFAIVFSRIVGVFSRDDDHETKRQNCNLFSLFFLVMGLISFVTYFFQGFTFGKAGEILTKRVRYMVFKSMLRQDISWFDDHKNSTGSLTTRLASDASSVKGAMGARLAVVTQNVANLGTGVILSLVYGWQLTLLLVVIIPLIVLGGIIEMKLLSGQALKDKKQLEISGKIATEAIENFRTIVSLTREQKFETMYAQSLQVPYRNAMKKAHVFGITFSFTQAMMYFSYAACFRFGAYLVAQQLMTFENVMLVFSAVVFGAMAAGNTSSFAPDYAKAKVSASHIIRIIEKTPEIDSYSTEGLKPTLLEGNVKFNGVQFNYPTRPNIPVLQGLSLEVKKGQTLALVGSSGCGKSTVVQLLERFYDPMAGSVFLDGKEIKQLNVQWLRAHLGIVSQEPILFDCSIAENIAYGDNSRAVSHEEIVRAAKEANIHQFIDSLPDKYNTRVGDKGTQLSGGQKQRIAIARALVRQPHILLLDEATSALDTESEKVVQEALDKAREGRTCIVIAHRLSTIQNADLIVVIENGKVKEHGTHQQLLAQKGIYFSMVQAGAKRS</sequence>
<comment type="function">
    <text evidence="2">Translocates drugs and phospholipids across the membrane. Catalyzes the flop of phospholipids from the cytoplasmic to the exoplasmic leaflet of the apical membrane. Participates mainly to the flop of phosphatidylcholine, phosphatidylethanolamine, beta-D-glucosylceramides and sphingomyelins. Energy-dependent efflux pump responsible for decreased drug accumulation in multidrug-resistant cells.</text>
</comment>
<comment type="catalytic activity">
    <reaction evidence="2">
        <text>ATP + H2O + xenobioticSide 1 = ADP + phosphate + xenobioticSide 2.</text>
        <dbReference type="EC" id="7.6.2.2"/>
    </reaction>
</comment>
<comment type="catalytic activity">
    <reaction evidence="2">
        <text>ATP + H2O + phospholipidSide 1 = ADP + phosphate + phospholipidSide 2.</text>
        <dbReference type="EC" id="7.6.2.1"/>
    </reaction>
</comment>
<comment type="catalytic activity">
    <reaction evidence="2">
        <text>a 1,2-diacyl-sn-glycero-3-phosphoethanolamine(in) + ATP + H2O = a 1,2-diacyl-sn-glycero-3-phosphoethanolamine(out) + ADP + phosphate + H(+)</text>
        <dbReference type="Rhea" id="RHEA:36439"/>
        <dbReference type="ChEBI" id="CHEBI:15377"/>
        <dbReference type="ChEBI" id="CHEBI:15378"/>
        <dbReference type="ChEBI" id="CHEBI:30616"/>
        <dbReference type="ChEBI" id="CHEBI:43474"/>
        <dbReference type="ChEBI" id="CHEBI:64612"/>
        <dbReference type="ChEBI" id="CHEBI:456216"/>
    </reaction>
</comment>
<comment type="catalytic activity">
    <reaction evidence="2">
        <text>a 1,2-diacyl-sn-glycero-3-phosphocholine(out) + ATP + H2O = a 1,2-diacyl-sn-glycero-3-phosphocholine(in) + ADP + phosphate + H(+)</text>
        <dbReference type="Rhea" id="RHEA:38583"/>
        <dbReference type="ChEBI" id="CHEBI:15377"/>
        <dbReference type="ChEBI" id="CHEBI:15378"/>
        <dbReference type="ChEBI" id="CHEBI:30616"/>
        <dbReference type="ChEBI" id="CHEBI:43474"/>
        <dbReference type="ChEBI" id="CHEBI:57643"/>
        <dbReference type="ChEBI" id="CHEBI:456216"/>
    </reaction>
</comment>
<comment type="catalytic activity">
    <reaction evidence="2">
        <text>a beta-D-glucosyl-(1&lt;-&gt;1')-N-acylsphing-4-enine(in) + ATP + H2O = a beta-D-glucosyl-(1&lt;-&gt;1')-N-acylsphing-4-enine(out) + ADP + phosphate + H(+)</text>
        <dbReference type="Rhea" id="RHEA:38943"/>
        <dbReference type="ChEBI" id="CHEBI:15377"/>
        <dbReference type="ChEBI" id="CHEBI:15378"/>
        <dbReference type="ChEBI" id="CHEBI:22801"/>
        <dbReference type="ChEBI" id="CHEBI:30616"/>
        <dbReference type="ChEBI" id="CHEBI:43474"/>
        <dbReference type="ChEBI" id="CHEBI:456216"/>
    </reaction>
</comment>
<comment type="catalytic activity">
    <reaction evidence="2">
        <text>a sphingomyelin(in) + ATP + H2O = a sphingomyelin(out) + ADP + phosphate + H(+)</text>
        <dbReference type="Rhea" id="RHEA:38903"/>
        <dbReference type="ChEBI" id="CHEBI:15377"/>
        <dbReference type="ChEBI" id="CHEBI:15378"/>
        <dbReference type="ChEBI" id="CHEBI:17636"/>
        <dbReference type="ChEBI" id="CHEBI:30616"/>
        <dbReference type="ChEBI" id="CHEBI:43474"/>
        <dbReference type="ChEBI" id="CHEBI:456216"/>
    </reaction>
</comment>
<comment type="activity regulation">
    <text evidence="2">Translocase activity is inhibited by verapamil and is sensitive to energy depletion. C1orf115 regulates drug efflux through modulation of ABCB1 localization and activity.</text>
</comment>
<comment type="subunit">
    <text evidence="1">Interacts with PSMB5.</text>
</comment>
<comment type="subcellular location">
    <subcellularLocation>
        <location evidence="2">Cell membrane</location>
        <topology evidence="5">Multi-pass membrane protein</topology>
    </subcellularLocation>
    <subcellularLocation>
        <location evidence="2">Apical cell membrane</location>
    </subcellularLocation>
    <subcellularLocation>
        <location evidence="2">Cytoplasm</location>
    </subcellularLocation>
    <text evidence="2">ABCB1 localization is influenced by C1orf115 expression levels (plasma membrane versus cytoplasm).</text>
</comment>
<comment type="PTM">
    <text>Several phosphorylated serine residues are present in the linker domain.</text>
</comment>
<comment type="miscellaneous">
    <text>In mouse the MDR gene family includes three or more related but distinct cellular genes.</text>
</comment>
<comment type="similarity">
    <text evidence="7">Belongs to the ABC transporter superfamily. ABCB family. Multidrug resistance exporter (TC 3.A.1.201) subfamily.</text>
</comment>
<proteinExistence type="evidence at protein level"/>
<name>MDR1B_MOUSE</name>
<evidence type="ECO:0000250" key="1"/>
<evidence type="ECO:0000250" key="2">
    <source>
        <dbReference type="UniProtKB" id="P08183"/>
    </source>
</evidence>
<evidence type="ECO:0000255" key="3"/>
<evidence type="ECO:0000255" key="4">
    <source>
        <dbReference type="PROSITE-ProRule" id="PRU00434"/>
    </source>
</evidence>
<evidence type="ECO:0000255" key="5">
    <source>
        <dbReference type="PROSITE-ProRule" id="PRU00441"/>
    </source>
</evidence>
<evidence type="ECO:0000256" key="6">
    <source>
        <dbReference type="SAM" id="MobiDB-lite"/>
    </source>
</evidence>
<evidence type="ECO:0000305" key="7"/>
<evidence type="ECO:0000312" key="8">
    <source>
        <dbReference type="MGI" id="MGI:97568"/>
    </source>
</evidence>
<evidence type="ECO:0007744" key="9">
    <source>
    </source>
</evidence>